<dbReference type="EMBL" id="CR926104">
    <property type="protein sequence ID" value="CAI29730.1"/>
    <property type="molecule type" value="mRNA"/>
</dbReference>
<dbReference type="RefSeq" id="NP_001127120.1">
    <property type="nucleotide sequence ID" value="NM_001133648.1"/>
</dbReference>
<dbReference type="GeneID" id="100174166"/>
<dbReference type="KEGG" id="pon:100174166"/>
<dbReference type="CTD" id="9315"/>
<dbReference type="eggNOG" id="ENOG502SFKT">
    <property type="taxonomic scope" value="Eukaryota"/>
</dbReference>
<dbReference type="InParanoid" id="Q5NVD3"/>
<dbReference type="OrthoDB" id="9383199at2759"/>
<dbReference type="Proteomes" id="UP000001595">
    <property type="component" value="Unplaced"/>
</dbReference>
<dbReference type="GO" id="GO:0005737">
    <property type="term" value="C:cytoplasm"/>
    <property type="evidence" value="ECO:0007669"/>
    <property type="project" value="UniProtKB-SubCell"/>
</dbReference>
<dbReference type="GO" id="GO:0031103">
    <property type="term" value="P:axon regeneration"/>
    <property type="evidence" value="ECO:0007669"/>
    <property type="project" value="TreeGrafter"/>
</dbReference>
<dbReference type="GO" id="GO:0045664">
    <property type="term" value="P:regulation of neuron differentiation"/>
    <property type="evidence" value="ECO:0007669"/>
    <property type="project" value="TreeGrafter"/>
</dbReference>
<dbReference type="GO" id="GO:0017015">
    <property type="term" value="P:regulation of transforming growth factor beta receptor signaling pathway"/>
    <property type="evidence" value="ECO:0007669"/>
    <property type="project" value="TreeGrafter"/>
</dbReference>
<dbReference type="InterPro" id="IPR024417">
    <property type="entry name" value="Neuronal_3.1"/>
</dbReference>
<dbReference type="PANTHER" id="PTHR17102">
    <property type="entry name" value="NEURONAL REGENERATION-RELATED PROTEIN"/>
    <property type="match status" value="1"/>
</dbReference>
<dbReference type="PANTHER" id="PTHR17102:SF4">
    <property type="entry name" value="NEURONAL REGENERATION-RELATED PROTEIN"/>
    <property type="match status" value="1"/>
</dbReference>
<dbReference type="Pfam" id="PF11092">
    <property type="entry name" value="Alveol-reg_P311"/>
    <property type="match status" value="1"/>
</dbReference>
<sequence>MVYYPELSVWVSQEPFPNKDMEGRLPKGRLPVPKEVNRKKNDETNAASLTPLGSSELRSPRISYLHSF</sequence>
<keyword id="KW-0963">Cytoplasm</keyword>
<keyword id="KW-0597">Phosphoprotein</keyword>
<keyword id="KW-1185">Reference proteome</keyword>
<organism>
    <name type="scientific">Pongo abelii</name>
    <name type="common">Sumatran orangutan</name>
    <name type="synonym">Pongo pygmaeus abelii</name>
    <dbReference type="NCBI Taxonomy" id="9601"/>
    <lineage>
        <taxon>Eukaryota</taxon>
        <taxon>Metazoa</taxon>
        <taxon>Chordata</taxon>
        <taxon>Craniata</taxon>
        <taxon>Vertebrata</taxon>
        <taxon>Euteleostomi</taxon>
        <taxon>Mammalia</taxon>
        <taxon>Eutheria</taxon>
        <taxon>Euarchontoglires</taxon>
        <taxon>Primates</taxon>
        <taxon>Haplorrhini</taxon>
        <taxon>Catarrhini</taxon>
        <taxon>Hominidae</taxon>
        <taxon>Pongo</taxon>
    </lineage>
</organism>
<proteinExistence type="inferred from homology"/>
<reference key="1">
    <citation type="submission" date="2004-11" db="EMBL/GenBank/DDBJ databases">
        <authorList>
            <consortium name="The German cDNA consortium"/>
        </authorList>
    </citation>
    <scope>NUCLEOTIDE SEQUENCE [LARGE SCALE MRNA]</scope>
    <source>
        <tissue>Brain cortex</tissue>
    </source>
</reference>
<comment type="function">
    <text evidence="1">May have roles in neural function and cellular differentiation. Ectopic expression promotes axonal regeneration, induces differentiation of fibroblast into myofibroblast, induces myofibroblast ameboid migration, augments motility of gliomas, and increases retinoic-acid regulation of lipid-droplet biogenesis. Down-regulates the expression of TGFB1 and TGFB2 but not of TGFB3. May play a role in the regulation of alveolar generation.</text>
</comment>
<comment type="subunit">
    <text evidence="1">Interacts with the latency-associated peptides (LAP) of TGFB1 and TGFB2; the interaction results in a decrease in TGFB autoinduction. Interacts with FLNA.</text>
</comment>
<comment type="subcellular location">
    <subcellularLocation>
        <location evidence="1">Cytoplasm</location>
    </subcellularLocation>
</comment>
<comment type="PTM">
    <text evidence="1">Phosphorylated on Ser-59. Phosphorylation decreases stability and activity.</text>
</comment>
<evidence type="ECO:0000250" key="1"/>
<evidence type="ECO:0000256" key="2">
    <source>
        <dbReference type="SAM" id="MobiDB-lite"/>
    </source>
</evidence>
<name>NREP_PONAB</name>
<accession>Q5NVD3</accession>
<gene>
    <name type="primary">NREP</name>
    <name type="synonym">P311</name>
</gene>
<protein>
    <recommendedName>
        <fullName>Neuronal regeneration-related protein</fullName>
    </recommendedName>
    <alternativeName>
        <fullName>Neuronal protein 3.1</fullName>
    </alternativeName>
    <alternativeName>
        <fullName>Protein p311</fullName>
    </alternativeName>
</protein>
<feature type="chain" id="PRO_0000253596" description="Neuronal regeneration-related protein">
    <location>
        <begin position="1"/>
        <end position="68"/>
    </location>
</feature>
<feature type="region of interest" description="Disordered" evidence="2">
    <location>
        <begin position="21"/>
        <end position="54"/>
    </location>
</feature>
<feature type="compositionally biased region" description="Polar residues" evidence="2">
    <location>
        <begin position="44"/>
        <end position="54"/>
    </location>
</feature>